<reference key="1">
    <citation type="journal article" date="2000" name="Nature">
        <title>Sequence and analysis of chromosome 1 of the plant Arabidopsis thaliana.</title>
        <authorList>
            <person name="Theologis A."/>
            <person name="Ecker J.R."/>
            <person name="Palm C.J."/>
            <person name="Federspiel N.A."/>
            <person name="Kaul S."/>
            <person name="White O."/>
            <person name="Alonso J."/>
            <person name="Altafi H."/>
            <person name="Araujo R."/>
            <person name="Bowman C.L."/>
            <person name="Brooks S.Y."/>
            <person name="Buehler E."/>
            <person name="Chan A."/>
            <person name="Chao Q."/>
            <person name="Chen H."/>
            <person name="Cheuk R.F."/>
            <person name="Chin C.W."/>
            <person name="Chung M.K."/>
            <person name="Conn L."/>
            <person name="Conway A.B."/>
            <person name="Conway A.R."/>
            <person name="Creasy T.H."/>
            <person name="Dewar K."/>
            <person name="Dunn P."/>
            <person name="Etgu P."/>
            <person name="Feldblyum T.V."/>
            <person name="Feng J.-D."/>
            <person name="Fong B."/>
            <person name="Fujii C.Y."/>
            <person name="Gill J.E."/>
            <person name="Goldsmith A.D."/>
            <person name="Haas B."/>
            <person name="Hansen N.F."/>
            <person name="Hughes B."/>
            <person name="Huizar L."/>
            <person name="Hunter J.L."/>
            <person name="Jenkins J."/>
            <person name="Johnson-Hopson C."/>
            <person name="Khan S."/>
            <person name="Khaykin E."/>
            <person name="Kim C.J."/>
            <person name="Koo H.L."/>
            <person name="Kremenetskaia I."/>
            <person name="Kurtz D.B."/>
            <person name="Kwan A."/>
            <person name="Lam B."/>
            <person name="Langin-Hooper S."/>
            <person name="Lee A."/>
            <person name="Lee J.M."/>
            <person name="Lenz C.A."/>
            <person name="Li J.H."/>
            <person name="Li Y.-P."/>
            <person name="Lin X."/>
            <person name="Liu S.X."/>
            <person name="Liu Z.A."/>
            <person name="Luros J.S."/>
            <person name="Maiti R."/>
            <person name="Marziali A."/>
            <person name="Militscher J."/>
            <person name="Miranda M."/>
            <person name="Nguyen M."/>
            <person name="Nierman W.C."/>
            <person name="Osborne B.I."/>
            <person name="Pai G."/>
            <person name="Peterson J."/>
            <person name="Pham P.K."/>
            <person name="Rizzo M."/>
            <person name="Rooney T."/>
            <person name="Rowley D."/>
            <person name="Sakano H."/>
            <person name="Salzberg S.L."/>
            <person name="Schwartz J.R."/>
            <person name="Shinn P."/>
            <person name="Southwick A.M."/>
            <person name="Sun H."/>
            <person name="Tallon L.J."/>
            <person name="Tambunga G."/>
            <person name="Toriumi M.J."/>
            <person name="Town C.D."/>
            <person name="Utterback T."/>
            <person name="Van Aken S."/>
            <person name="Vaysberg M."/>
            <person name="Vysotskaia V.S."/>
            <person name="Walker M."/>
            <person name="Wu D."/>
            <person name="Yu G."/>
            <person name="Fraser C.M."/>
            <person name="Venter J.C."/>
            <person name="Davis R.W."/>
        </authorList>
    </citation>
    <scope>NUCLEOTIDE SEQUENCE [LARGE SCALE GENOMIC DNA]</scope>
    <source>
        <strain>cv. Columbia</strain>
    </source>
</reference>
<reference key="2">
    <citation type="journal article" date="2017" name="Plant J.">
        <title>Araport11: a complete reannotation of the Arabidopsis thaliana reference genome.</title>
        <authorList>
            <person name="Cheng C.Y."/>
            <person name="Krishnakumar V."/>
            <person name="Chan A.P."/>
            <person name="Thibaud-Nissen F."/>
            <person name="Schobel S."/>
            <person name="Town C.D."/>
        </authorList>
    </citation>
    <scope>GENOME REANNOTATION</scope>
    <source>
        <strain>cv. Columbia</strain>
    </source>
</reference>
<reference key="3">
    <citation type="journal article" date="2003" name="Science">
        <title>Empirical analysis of transcriptional activity in the Arabidopsis genome.</title>
        <authorList>
            <person name="Yamada K."/>
            <person name="Lim J."/>
            <person name="Dale J.M."/>
            <person name="Chen H."/>
            <person name="Shinn P."/>
            <person name="Palm C.J."/>
            <person name="Southwick A.M."/>
            <person name="Wu H.C."/>
            <person name="Kim C.J."/>
            <person name="Nguyen M."/>
            <person name="Pham P.K."/>
            <person name="Cheuk R.F."/>
            <person name="Karlin-Newmann G."/>
            <person name="Liu S.X."/>
            <person name="Lam B."/>
            <person name="Sakano H."/>
            <person name="Wu T."/>
            <person name="Yu G."/>
            <person name="Miranda M."/>
            <person name="Quach H.L."/>
            <person name="Tripp M."/>
            <person name="Chang C.H."/>
            <person name="Lee J.M."/>
            <person name="Toriumi M.J."/>
            <person name="Chan M.M."/>
            <person name="Tang C.C."/>
            <person name="Onodera C.S."/>
            <person name="Deng J.M."/>
            <person name="Akiyama K."/>
            <person name="Ansari Y."/>
            <person name="Arakawa T."/>
            <person name="Banh J."/>
            <person name="Banno F."/>
            <person name="Bowser L."/>
            <person name="Brooks S.Y."/>
            <person name="Carninci P."/>
            <person name="Chao Q."/>
            <person name="Choy N."/>
            <person name="Enju A."/>
            <person name="Goldsmith A.D."/>
            <person name="Gurjal M."/>
            <person name="Hansen N.F."/>
            <person name="Hayashizaki Y."/>
            <person name="Johnson-Hopson C."/>
            <person name="Hsuan V.W."/>
            <person name="Iida K."/>
            <person name="Karnes M."/>
            <person name="Khan S."/>
            <person name="Koesema E."/>
            <person name="Ishida J."/>
            <person name="Jiang P.X."/>
            <person name="Jones T."/>
            <person name="Kawai J."/>
            <person name="Kamiya A."/>
            <person name="Meyers C."/>
            <person name="Nakajima M."/>
            <person name="Narusaka M."/>
            <person name="Seki M."/>
            <person name="Sakurai T."/>
            <person name="Satou M."/>
            <person name="Tamse R."/>
            <person name="Vaysberg M."/>
            <person name="Wallender E.K."/>
            <person name="Wong C."/>
            <person name="Yamamura Y."/>
            <person name="Yuan S."/>
            <person name="Shinozaki K."/>
            <person name="Davis R.W."/>
            <person name="Theologis A."/>
            <person name="Ecker J.R."/>
        </authorList>
    </citation>
    <scope>NUCLEOTIDE SEQUENCE [LARGE SCALE MRNA] (ISOFORM 1)</scope>
    <source>
        <strain>cv. Columbia</strain>
    </source>
</reference>
<reference key="4">
    <citation type="journal article" date="2006" name="BMC Genomics">
        <title>Cross genome comparisons of serine proteases in Arabidopsis and rice.</title>
        <authorList>
            <person name="Tripathi L.P."/>
            <person name="Sowdhamini R."/>
        </authorList>
    </citation>
    <scope>GENE FAMILY</scope>
    <scope>NOMENCLATURE</scope>
</reference>
<reference key="5">
    <citation type="journal article" date="2007" name="Genome Res.">
        <title>Functional and evolutionary implications of enhanced genomic analysis of rhomboid intramembrane proteases.</title>
        <authorList>
            <person name="Lemberg M.K."/>
            <person name="Freeman M."/>
        </authorList>
    </citation>
    <scope>GENE FAMILY</scope>
</reference>
<reference key="6">
    <citation type="journal article" date="2007" name="Plant Cell Physiol.">
        <title>Uncovering a link between a plastid translocon component and rhomboid proteases using yeast mitochondria-based assays.</title>
        <authorList>
            <person name="Karakasis K."/>
            <person name="Taylor D."/>
            <person name="Ko K."/>
        </authorList>
    </citation>
    <scope>FUNCTION</scope>
</reference>
<proteinExistence type="evidence at transcript level"/>
<sequence length="322" mass="35451">MHAIFCRRVAVGCSSPQLTKLVTKQASQSRHSLSHLLPFDLSSRFVPPYVVSRSARVHGFFAGKLGNTNLKLKFGNVMESRAGFFSSELPSHGFESGGFTGFQKRGWKSWINGANGVVFGLVIANAAVFTMWRVLGKDNMWMVKNFMLSRYSFMTGRIHTLITSGFSHVGATHIILNMMGLCYFGARIARSFGPRYLLKLYFAGALGGSVFFLSSHALSVISLKGQRVVPKDQLKVPIGKLGANGPVYAITLLDMLLYPKVTTYFGLMLRVPVFAGIYSLGLNIIKMLEGKNNNTLTSLDQLGGVVVAVIAWARIRKGRFCY</sequence>
<comment type="function">
    <text evidence="3">Rhomboid-type serine protease that catalyzes intramembrane proteolysis. May cleave the plastid translocon component Tic40.</text>
</comment>
<comment type="subcellular location">
    <subcellularLocation>
        <location evidence="1">Plastid</location>
        <location evidence="1">Chloroplast membrane</location>
        <topology evidence="1">Multi-pass membrane protein</topology>
    </subcellularLocation>
</comment>
<comment type="alternative products">
    <event type="alternative splicing"/>
    <isoform>
        <id>Q84WG3-1</id>
        <name>1</name>
        <sequence type="displayed"/>
    </isoform>
    <isoform>
        <id>Q84WG3-2</id>
        <name>2</name>
        <sequence type="described" ref="VSP_057733 VSP_057734"/>
    </isoform>
</comment>
<comment type="similarity">
    <text evidence="5">Belongs to the peptidase S54 family.</text>
</comment>
<comment type="caution">
    <text evidence="4">Might be an inactive rhomboid-type serine protease due to mismatches with the consensus active sites.</text>
</comment>
<comment type="sequence caution" evidence="5">
    <conflict type="erroneous gene model prediction">
        <sequence resource="EMBL-CDS" id="AAG51877"/>
    </conflict>
</comment>
<accession>Q84WG3</accession>
<accession>F4HTU5</accession>
<accession>Q9C6A2</accession>
<keyword id="KW-0025">Alternative splicing</keyword>
<keyword id="KW-0150">Chloroplast</keyword>
<keyword id="KW-0378">Hydrolase</keyword>
<keyword id="KW-0472">Membrane</keyword>
<keyword id="KW-0934">Plastid</keyword>
<keyword id="KW-0645">Protease</keyword>
<keyword id="KW-1185">Reference proteome</keyword>
<keyword id="KW-0809">Transit peptide</keyword>
<keyword id="KW-0812">Transmembrane</keyword>
<keyword id="KW-1133">Transmembrane helix</keyword>
<dbReference type="EMBL" id="AC079678">
    <property type="protein sequence ID" value="AAG51877.1"/>
    <property type="status" value="ALT_SEQ"/>
    <property type="molecule type" value="Genomic_DNA"/>
</dbReference>
<dbReference type="EMBL" id="CP002684">
    <property type="protein sequence ID" value="AEE35553.1"/>
    <property type="molecule type" value="Genomic_DNA"/>
</dbReference>
<dbReference type="EMBL" id="CP002684">
    <property type="protein sequence ID" value="AEE35554.1"/>
    <property type="molecule type" value="Genomic_DNA"/>
</dbReference>
<dbReference type="EMBL" id="BT003849">
    <property type="protein sequence ID" value="AAO41899.1"/>
    <property type="molecule type" value="mRNA"/>
</dbReference>
<dbReference type="PIR" id="D96769">
    <property type="entry name" value="D96769"/>
</dbReference>
<dbReference type="RefSeq" id="NP_177553.3">
    <molecule id="Q84WG3-1"/>
    <property type="nucleotide sequence ID" value="NM_106073.5"/>
</dbReference>
<dbReference type="RefSeq" id="NP_974141.1">
    <molecule id="Q84WG3-2"/>
    <property type="nucleotide sequence ID" value="NM_202412.1"/>
</dbReference>
<dbReference type="FunCoup" id="Q84WG3">
    <property type="interactions" value="1264"/>
</dbReference>
<dbReference type="STRING" id="3702.Q84WG3"/>
<dbReference type="MEROPS" id="S54.A07"/>
<dbReference type="PaxDb" id="3702-AT1G74130.1"/>
<dbReference type="EnsemblPlants" id="AT1G74130.1">
    <molecule id="Q84WG3-1"/>
    <property type="protein sequence ID" value="AT1G74130.1"/>
    <property type="gene ID" value="AT1G74130"/>
</dbReference>
<dbReference type="EnsemblPlants" id="AT1G74130.2">
    <molecule id="Q84WG3-2"/>
    <property type="protein sequence ID" value="AT1G74130.2"/>
    <property type="gene ID" value="AT1G74130"/>
</dbReference>
<dbReference type="GeneID" id="843753"/>
<dbReference type="Gramene" id="AT1G74130.1">
    <molecule id="Q84WG3-1"/>
    <property type="protein sequence ID" value="AT1G74130.1"/>
    <property type="gene ID" value="AT1G74130"/>
</dbReference>
<dbReference type="Gramene" id="AT1G74130.2">
    <molecule id="Q84WG3-2"/>
    <property type="protein sequence ID" value="AT1G74130.2"/>
    <property type="gene ID" value="AT1G74130"/>
</dbReference>
<dbReference type="KEGG" id="ath:AT1G74130"/>
<dbReference type="Araport" id="AT1G74130"/>
<dbReference type="TAIR" id="AT1G74130"/>
<dbReference type="eggNOG" id="KOG2980">
    <property type="taxonomic scope" value="Eukaryota"/>
</dbReference>
<dbReference type="HOGENOM" id="CLU_048192_0_0_1"/>
<dbReference type="InParanoid" id="Q84WG3"/>
<dbReference type="OMA" id="MLWHLAD"/>
<dbReference type="OrthoDB" id="418595at2759"/>
<dbReference type="PhylomeDB" id="Q84WG3"/>
<dbReference type="PRO" id="PR:Q84WG3"/>
<dbReference type="Proteomes" id="UP000006548">
    <property type="component" value="Chromosome 1"/>
</dbReference>
<dbReference type="ExpressionAtlas" id="Q84WG3">
    <property type="expression patterns" value="baseline and differential"/>
</dbReference>
<dbReference type="GO" id="GO:0031969">
    <property type="term" value="C:chloroplast membrane"/>
    <property type="evidence" value="ECO:0007669"/>
    <property type="project" value="UniProtKB-SubCell"/>
</dbReference>
<dbReference type="GO" id="GO:0004252">
    <property type="term" value="F:serine-type endopeptidase activity"/>
    <property type="evidence" value="ECO:0007669"/>
    <property type="project" value="InterPro"/>
</dbReference>
<dbReference type="GO" id="GO:0006508">
    <property type="term" value="P:proteolysis"/>
    <property type="evidence" value="ECO:0007669"/>
    <property type="project" value="UniProtKB-KW"/>
</dbReference>
<dbReference type="FunFam" id="1.20.1540.10:FF:000018">
    <property type="entry name" value="RHOMBOID-like protein 12, mitochondrial"/>
    <property type="match status" value="1"/>
</dbReference>
<dbReference type="Gene3D" id="1.20.1540.10">
    <property type="entry name" value="Rhomboid-like"/>
    <property type="match status" value="1"/>
</dbReference>
<dbReference type="InterPro" id="IPR022764">
    <property type="entry name" value="Peptidase_S54_rhomboid_dom"/>
</dbReference>
<dbReference type="InterPro" id="IPR035952">
    <property type="entry name" value="Rhomboid-like_sf"/>
</dbReference>
<dbReference type="InterPro" id="IPR050925">
    <property type="entry name" value="Rhomboid_protease_S54"/>
</dbReference>
<dbReference type="PANTHER" id="PTHR43731">
    <property type="entry name" value="RHOMBOID PROTEASE"/>
    <property type="match status" value="1"/>
</dbReference>
<dbReference type="PANTHER" id="PTHR43731:SF33">
    <property type="entry name" value="RHOMBOID-LIKE PROTEIN 16, CHLOROPLASTIC-RELATED"/>
    <property type="match status" value="1"/>
</dbReference>
<dbReference type="Pfam" id="PF01694">
    <property type="entry name" value="Rhomboid"/>
    <property type="match status" value="1"/>
</dbReference>
<dbReference type="SUPFAM" id="SSF144091">
    <property type="entry name" value="Rhomboid-like"/>
    <property type="match status" value="1"/>
</dbReference>
<feature type="transit peptide" description="Chloroplast" evidence="1">
    <location>
        <begin position="1"/>
        <end position="52"/>
    </location>
</feature>
<feature type="chain" id="PRO_0000433335" description="Rhomboid-like protein 16, chloroplastic">
    <location>
        <begin position="53"/>
        <end position="322"/>
    </location>
</feature>
<feature type="transmembrane region" description="Helical" evidence="1">
    <location>
        <begin position="110"/>
        <end position="130"/>
    </location>
</feature>
<feature type="transmembrane region" description="Helical" evidence="1">
    <location>
        <begin position="166"/>
        <end position="186"/>
    </location>
</feature>
<feature type="transmembrane region" description="Helical" evidence="1">
    <location>
        <begin position="201"/>
        <end position="221"/>
    </location>
</feature>
<feature type="transmembrane region" description="Helical" evidence="1">
    <location>
        <begin position="238"/>
        <end position="258"/>
    </location>
</feature>
<feature type="transmembrane region" description="Helical" evidence="1">
    <location>
        <begin position="265"/>
        <end position="285"/>
    </location>
</feature>
<feature type="transmembrane region" description="Helical" evidence="1">
    <location>
        <begin position="295"/>
        <end position="315"/>
    </location>
</feature>
<feature type="splice variant" id="VSP_057733" description="In isoform 2.">
    <original>GKNNNTL</original>
    <variation>VGKTTIP</variation>
    <location>
        <begin position="290"/>
        <end position="296"/>
    </location>
</feature>
<feature type="splice variant" id="VSP_057734" description="In isoform 2.">
    <location>
        <begin position="297"/>
        <end position="322"/>
    </location>
</feature>
<gene>
    <name evidence="2" type="primary">RBL16</name>
    <name evidence="6" type="ordered locus">At1g74130</name>
    <name evidence="7" type="ORF">F9E11.2</name>
</gene>
<evidence type="ECO:0000255" key="1"/>
<evidence type="ECO:0000303" key="2">
    <source>
    </source>
</evidence>
<evidence type="ECO:0000303" key="3">
    <source>
    </source>
</evidence>
<evidence type="ECO:0000303" key="4">
    <source>
    </source>
</evidence>
<evidence type="ECO:0000305" key="5"/>
<evidence type="ECO:0000312" key="6">
    <source>
        <dbReference type="Araport" id="AT1G74130"/>
    </source>
</evidence>
<evidence type="ECO:0000312" key="7">
    <source>
        <dbReference type="EMBL" id="AAG51877.1"/>
    </source>
</evidence>
<evidence type="ECO:0000312" key="8">
    <source>
        <dbReference type="EMBL" id="AAO41899.1"/>
    </source>
</evidence>
<name>RBL16_ARATH</name>
<organism evidence="8">
    <name type="scientific">Arabidopsis thaliana</name>
    <name type="common">Mouse-ear cress</name>
    <dbReference type="NCBI Taxonomy" id="3702"/>
    <lineage>
        <taxon>Eukaryota</taxon>
        <taxon>Viridiplantae</taxon>
        <taxon>Streptophyta</taxon>
        <taxon>Embryophyta</taxon>
        <taxon>Tracheophyta</taxon>
        <taxon>Spermatophyta</taxon>
        <taxon>Magnoliopsida</taxon>
        <taxon>eudicotyledons</taxon>
        <taxon>Gunneridae</taxon>
        <taxon>Pentapetalae</taxon>
        <taxon>rosids</taxon>
        <taxon>malvids</taxon>
        <taxon>Brassicales</taxon>
        <taxon>Brassicaceae</taxon>
        <taxon>Camelineae</taxon>
        <taxon>Arabidopsis</taxon>
    </lineage>
</organism>
<protein>
    <recommendedName>
        <fullName evidence="2">Rhomboid-like protein 16, chloroplastic</fullName>
        <shortName evidence="2">AtRBL16</shortName>
    </recommendedName>
</protein>